<protein>
    <recommendedName>
        <fullName evidence="12 14 16 17 18 20 21">Jacalin-related lectin Calsepa</fullName>
    </recommendedName>
    <alternativeName>
        <fullName evidence="12 13 15 19 20 21">Agglutinin</fullName>
    </alternativeName>
    <alternativeName>
        <fullName evidence="20">Mannose/maltose-specific lectin</fullName>
    </alternativeName>
</protein>
<proteinExistence type="evidence at protein level"/>
<organism evidence="23">
    <name type="scientific">Calystegia sepium</name>
    <name type="common">Hedge bindweed</name>
    <name type="synonym">Convolvulus sepium</name>
    <dbReference type="NCBI Taxonomy" id="47519"/>
    <lineage>
        <taxon>Eukaryota</taxon>
        <taxon>Viridiplantae</taxon>
        <taxon>Streptophyta</taxon>
        <taxon>Embryophyta</taxon>
        <taxon>Tracheophyta</taxon>
        <taxon>Spermatophyta</taxon>
        <taxon>Magnoliopsida</taxon>
        <taxon>eudicotyledons</taxon>
        <taxon>Gunneridae</taxon>
        <taxon>Pentapetalae</taxon>
        <taxon>asterids</taxon>
        <taxon>lamiids</taxon>
        <taxon>Solanales</taxon>
        <taxon>Convolvulaceae</taxon>
        <taxon>Convolvuleae</taxon>
        <taxon>Calystegia</taxon>
    </lineage>
</organism>
<feature type="initiator methionine" description="Removed" evidence="22">
    <location>
        <position position="1"/>
    </location>
</feature>
<feature type="chain" id="PRO_0000450439" description="Jacalin-related lectin Calsepa" evidence="22">
    <location>
        <begin position="2"/>
        <end position="153"/>
    </location>
</feature>
<feature type="domain" description="Jacalin-type lectin" evidence="1">
    <location>
        <begin position="6"/>
        <end position="152"/>
    </location>
</feature>
<feature type="region of interest" description="N-glycan binding" evidence="6 8 25 26">
    <location>
        <begin position="17"/>
        <end position="18"/>
    </location>
</feature>
<feature type="region of interest" description="N-glycan binding" evidence="6 8 25 26">
    <location>
        <begin position="95"/>
        <end position="96"/>
    </location>
</feature>
<feature type="region of interest" description="N-glycan binding" evidence="6 8 25 26">
    <location>
        <begin position="140"/>
        <end position="144"/>
    </location>
</feature>
<feature type="modified residue" description="N-acetylalanine" evidence="3 24">
    <location>
        <position position="2"/>
    </location>
</feature>
<feature type="strand" evidence="27">
    <location>
        <begin position="7"/>
        <end position="13"/>
    </location>
</feature>
<feature type="strand" evidence="27">
    <location>
        <begin position="17"/>
        <end position="23"/>
    </location>
</feature>
<feature type="strand" evidence="27">
    <location>
        <begin position="30"/>
        <end position="36"/>
    </location>
</feature>
<feature type="turn" evidence="27">
    <location>
        <begin position="37"/>
        <end position="40"/>
    </location>
</feature>
<feature type="strand" evidence="27">
    <location>
        <begin position="41"/>
        <end position="50"/>
    </location>
</feature>
<feature type="strand" evidence="27">
    <location>
        <begin position="56"/>
        <end position="62"/>
    </location>
</feature>
<feature type="strand" evidence="27">
    <location>
        <begin position="71"/>
        <end position="76"/>
    </location>
</feature>
<feature type="strand" evidence="27">
    <location>
        <begin position="83"/>
        <end position="93"/>
    </location>
</feature>
<feature type="strand" evidence="27">
    <location>
        <begin position="96"/>
        <end position="108"/>
    </location>
</feature>
<feature type="strand" evidence="27">
    <location>
        <begin position="110"/>
        <end position="115"/>
    </location>
</feature>
<feature type="strand" evidence="27">
    <location>
        <begin position="119"/>
        <end position="123"/>
    </location>
</feature>
<feature type="strand" evidence="27">
    <location>
        <begin position="131"/>
        <end position="151"/>
    </location>
</feature>
<name>LECC_CALSE</name>
<dbReference type="EMBL" id="U56820">
    <property type="protein sequence ID" value="AAC49564.1"/>
    <property type="molecule type" value="mRNA"/>
</dbReference>
<dbReference type="PDB" id="1OUW">
    <property type="method" value="X-ray"/>
    <property type="resolution" value="1.37 A"/>
    <property type="chains" value="A/B/C/D=2-153"/>
</dbReference>
<dbReference type="PDB" id="5AV7">
    <property type="method" value="X-ray"/>
    <property type="resolution" value="1.85 A"/>
    <property type="chains" value="A/B/C/D=3-153"/>
</dbReference>
<dbReference type="PDB" id="5XFI">
    <property type="method" value="X-ray"/>
    <property type="resolution" value="1.65 A"/>
    <property type="chains" value="A/B=1-153"/>
</dbReference>
<dbReference type="PDBsum" id="1OUW"/>
<dbReference type="PDBsum" id="5AV7"/>
<dbReference type="PDBsum" id="5XFI"/>
<dbReference type="SMR" id="P93114"/>
<dbReference type="UniLectin" id="P93114"/>
<dbReference type="iPTMnet" id="P93114"/>
<dbReference type="EvolutionaryTrace" id="P93114"/>
<dbReference type="GO" id="GO:0005737">
    <property type="term" value="C:cytoplasm"/>
    <property type="evidence" value="ECO:0000314"/>
    <property type="project" value="UniProtKB"/>
</dbReference>
<dbReference type="GO" id="GO:0030246">
    <property type="term" value="F:carbohydrate binding"/>
    <property type="evidence" value="ECO:0000314"/>
    <property type="project" value="UniProtKB"/>
</dbReference>
<dbReference type="GO" id="GO:0050839">
    <property type="term" value="F:cell adhesion molecule binding"/>
    <property type="evidence" value="ECO:0000314"/>
    <property type="project" value="UniProtKB"/>
</dbReference>
<dbReference type="GO" id="GO:0005536">
    <property type="term" value="F:D-glucose binding"/>
    <property type="evidence" value="ECO:0000314"/>
    <property type="project" value="UniProtKB"/>
</dbReference>
<dbReference type="GO" id="GO:0005537">
    <property type="term" value="F:D-mannose binding"/>
    <property type="evidence" value="ECO:0000314"/>
    <property type="project" value="UniProtKB"/>
</dbReference>
<dbReference type="GO" id="GO:0042802">
    <property type="term" value="F:identical protein binding"/>
    <property type="evidence" value="ECO:0000314"/>
    <property type="project" value="UniProtKB"/>
</dbReference>
<dbReference type="GO" id="GO:0042803">
    <property type="term" value="F:protein homodimerization activity"/>
    <property type="evidence" value="ECO:0000314"/>
    <property type="project" value="UniProtKB"/>
</dbReference>
<dbReference type="GO" id="GO:0007157">
    <property type="term" value="P:heterophilic cell-cell adhesion via plasma membrane cell adhesion molecules"/>
    <property type="evidence" value="ECO:0000314"/>
    <property type="project" value="UniProtKB"/>
</dbReference>
<dbReference type="GO" id="GO:0045840">
    <property type="term" value="P:positive regulation of mitotic nuclear division"/>
    <property type="evidence" value="ECO:0000314"/>
    <property type="project" value="UniProtKB"/>
</dbReference>
<dbReference type="CDD" id="cd09612">
    <property type="entry name" value="Jacalin"/>
    <property type="match status" value="1"/>
</dbReference>
<dbReference type="Gene3D" id="2.100.10.30">
    <property type="entry name" value="Jacalin-like lectin domain"/>
    <property type="match status" value="1"/>
</dbReference>
<dbReference type="InterPro" id="IPR001229">
    <property type="entry name" value="Jacalin-like_lectin_dom"/>
</dbReference>
<dbReference type="InterPro" id="IPR033734">
    <property type="entry name" value="Jacalin-like_lectin_dom_plant"/>
</dbReference>
<dbReference type="InterPro" id="IPR036404">
    <property type="entry name" value="Jacalin-like_lectin_dom_sf"/>
</dbReference>
<dbReference type="PANTHER" id="PTHR46506">
    <property type="entry name" value="OS05G0143600 PROTEIN"/>
    <property type="match status" value="1"/>
</dbReference>
<dbReference type="Pfam" id="PF01419">
    <property type="entry name" value="Jacalin"/>
    <property type="match status" value="1"/>
</dbReference>
<dbReference type="SMART" id="SM00915">
    <property type="entry name" value="Jacalin"/>
    <property type="match status" value="1"/>
</dbReference>
<dbReference type="SUPFAM" id="SSF51101">
    <property type="entry name" value="Mannose-binding lectins"/>
    <property type="match status" value="1"/>
</dbReference>
<dbReference type="PROSITE" id="PS51752">
    <property type="entry name" value="JACALIN_LECTIN"/>
    <property type="match status" value="1"/>
</dbReference>
<keyword id="KW-0002">3D-structure</keyword>
<keyword id="KW-0007">Acetylation</keyword>
<keyword id="KW-0963">Cytoplasm</keyword>
<keyword id="KW-0903">Direct protein sequencing</keyword>
<keyword id="KW-0430">Lectin</keyword>
<sequence>MAVPMDTISGPWGNNGGNFWSFRPVNKINQIVISYGGGGNNPIALTFSSTKADGSKDTITVGGGGPDSITGTEMVNIGTDEYLTGISGTFGIYLDNNVLRSITFTTNLKAHGPYGQKVGTPFSSANVVGNEIVGFLGRSGYYVDAIGTYNRHK</sequence>
<accession>P93114</accession>
<comment type="function">
    <text evidence="3 5 6 8 11">Mannose-binding lectin (PubMed:14561768, PubMed:18266762, PubMed:26971576, PubMed:28973127, PubMed:9111143). Preferentially binds mannose at concentrations ranging between 5 and 25 mM, but also binds glucose. Has a marked preference for methylated sugar derivatives, such as alpha-MeMan and alpha-MeGlc, at concentration down to 5 mM (PubMed:14561768). Binds to N-glycans, but not to glycolipid-type or other type of glycans (PubMed:28973127). Binds N-linked high-mannose-type glycans (PubMed:18266762, PubMed:28973127). Has a preference for smaller (Man(2)-Man(6)) high-mannose-type glycans to larger (Man(7)-Man(9)) ones. Recognizes both alpha1-6 extended and alpha1-3 extended monoantennary glycans. The addition of alpha1-2Man to the Man-alpha1-3Man-beta branch results in a significant loss of affinity, but beta1-2GlcNAc has some affinity. Has less affinity for biantennary glycans (PubMed:18266762). However, affinity is significant for the biantennary complex-type N-glycans with bisecting GlcNAc (PubMed:18266762, PubMed:26971576, PubMed:28973127). No affinity is observed for tri- and tetra-antennary glycans (PubMed:18266762). Binds bisected glycans of the mouse brain. Selectively binds to bisecting N-glycans which are in back-fold conformation, and does not favor a glycan with an extend conformation (PubMed:26971576). Has hemagglutinating activity against rabbit erythrocytes at 0.3 ug/ml and against trypsin-treated human erythrocytes at 5 ug/ml. Has mitogenic activity in murine cells (PubMed:9111143).</text>
</comment>
<comment type="activity regulation">
    <text evidence="11">Hemagglutinating activity is most inhibited by methyl alpha-mannopyranoside. This activity is inhibited to a less extent (about a third of the inhibition of that of methyl alpha-mannopyranoside) by methyl alpha-glucoside, other alpha-glucosides, such as maltose, isomaltose, panose or palatinose, and alpha-glucosides modified at the second position, such as methyl 2-deoxy-alpha-arabinoglucopyranoside or methyl 2-acetamido-2-deoxy alpha-glucopyranoside. Mildly inhibited by free monosaccharides, with glucose presenting at least 20-fold less inhibitory effect on hemagglutinating activity than mannose. Glycoproteins are somewhat inhibitory, the best being asialothyroglobulin and ovomucoid. Not inhibited by isomaltitol, sucrose or trehalose.</text>
</comment>
<comment type="subunit">
    <text evidence="3 4 11">Homodimer.</text>
</comment>
<comment type="subcellular location">
    <subcellularLocation>
        <location evidence="2">Cytoplasm</location>
    </subcellularLocation>
</comment>
<comment type="tissue specificity">
    <text evidence="2 3 4 10 11">Rhizome (at protein level) (PubMed:10908718, PubMed:14561768, PubMed:15299962, PubMed:8955378, PubMed:9111143). Detected in the cortex and the pith of rhizome. Not detected in vascular tissues, pericycle, endodermis or rhizodermis (PubMed:10908718).</text>
</comment>
<comment type="PTM">
    <text evidence="11">Not glycosylated.</text>
</comment>
<comment type="mass spectrometry"/>
<comment type="biotechnology">
    <text evidence="7 9 11">Can be used for the isolation of glycoproteins from humans, plants and fungi. Is a powerful T-cell mitogen in the mouse, and can thus be used as an alternative to concanavalin A for the mitogenic proliferation of murine lymphocytes (PubMed:9111143). Identified as one of the several suitable fluorescently labeled lectins that can be used in a combination for the visualization and quantification of extracellular glycoconjugates in dental supragingival biofilms grown for 48 hours in situ in the absence of dietary carbohydrates (PubMed:28748044). Used in lectin-based microarrays to detect altered glycosylation in cancer tissue (PubMed:32143591).</text>
</comment>
<comment type="similarity">
    <text evidence="1 22">Belongs to the jacalin lectin family.</text>
</comment>
<reference evidence="23" key="1">
    <citation type="journal article" date="1996" name="FEBS Lett.">
        <title>Molecular cloning of the mitogenic mannose/maltose-specific rhizome lectin from Calystegia sepium.</title>
        <authorList>
            <person name="Van Damme E.J."/>
            <person name="Barre A."/>
            <person name="Verhaert P."/>
            <person name="Rouge P."/>
            <person name="Peumans W.J."/>
        </authorList>
    </citation>
    <scope>NUCLEOTIDE SEQUENCE [MRNA]</scope>
    <scope>TISSUE SPECIFICITY</scope>
    <scope>MASS SPECTROMETRY</scope>
    <source>
        <tissue evidence="20 23">Rhizome</tissue>
    </source>
</reference>
<reference key="2">
    <citation type="journal article" date="1997" name="Glycoconj. J.">
        <title>Isolation of a novel plant lectin with an unusual specificity from Calystegia sepium.</title>
        <authorList>
            <person name="Peumans W.J."/>
            <person name="Winter H.C."/>
            <person name="Bemer V."/>
            <person name="Van Leuven F."/>
            <person name="Goldstein I.J."/>
            <person name="Truffa-Bachi P."/>
            <person name="Van Damme E.J."/>
        </authorList>
    </citation>
    <scope>PROTEIN SEQUENCE OF 6-25 AND 75-94</scope>
    <scope>FUNCTION</scope>
    <scope>ACTIVITY REGULATION</scope>
    <scope>SUBUNIT</scope>
    <scope>TISSUE SPECIFICITY</scope>
    <scope>BIOTECHNOLOGY</scope>
</reference>
<reference key="3">
    <citation type="journal article" date="1997" name="Acta Crystallogr. D">
        <title>Crystallization and preliminary X-ray analysis of a novel plant lectin from Calystegia sepium.</title>
        <authorList>
            <person name="Wright L.M."/>
            <person name="Wood S.D."/>
            <person name="Reynolds C.D."/>
            <person name="Rizkallah P.J."/>
            <person name="Van Damme E.J."/>
            <person name="Peumans W.J."/>
        </authorList>
    </citation>
    <scope>CRYSTALLIZATION</scope>
    <scope>SUBUNIT</scope>
    <scope>TISSUE SPECIFICITY</scope>
</reference>
<reference key="4">
    <citation type="journal article" date="2000" name="FEBS Lett.">
        <title>The galactose-binding and mannose-binding jacalin-related lectins are located in different sub-cellular compartments.</title>
        <authorList>
            <person name="Peumans W.J."/>
            <person name="Hause B."/>
            <person name="Van Damme E.J."/>
        </authorList>
    </citation>
    <scope>SUBCELLULAR LOCATION</scope>
    <scope>TISSUE SPECIFICITY</scope>
</reference>
<reference key="5">
    <citation type="journal article" date="2008" name="FEBS J.">
        <title>Analysis of the sugar-binding specificity of mannose-binding-type Jacalin-related lectins by frontal affinity chromatography--an approach to functional classification.</title>
        <authorList>
            <person name="Nakamura-Tsuruta S."/>
            <person name="Uchiyama N."/>
            <person name="Peumans W.J."/>
            <person name="Van Damme E.J."/>
            <person name="Totani K."/>
            <person name="Ito Y."/>
            <person name="Hirabayashi J."/>
        </authorList>
    </citation>
    <scope>FUNCTION</scope>
    <scope>SUBSTRATE SPECIFICITY</scope>
</reference>
<reference key="6">
    <citation type="journal article" date="2017" name="J. Oral Microbiol.">
        <title>Visualizing the dental biofilm matrix by means of fluorescence lectin-binding analysis.</title>
        <authorList>
            <person name="Tawakoli P.N."/>
            <person name="Neu T.R."/>
            <person name="Busck M.M."/>
            <person name="Kuhlicke U."/>
            <person name="Schramm A."/>
            <person name="Attin T."/>
            <person name="Wiedemeier D.B."/>
            <person name="Schlafer S."/>
        </authorList>
    </citation>
    <scope>BIOTECHNOLOGY</scope>
</reference>
<reference key="7">
    <citation type="journal article" date="2020" name="BMC Cancer">
        <title>Altered glycosylation associated with dedifferentiation of hepatocellular carcinoma: a lectin microarray-based study.</title>
        <authorList>
            <person name="Takayama H."/>
            <person name="Ohta M."/>
            <person name="Iwashita Y."/>
            <person name="Uchida H."/>
            <person name="Shitomi Y."/>
            <person name="Yada K."/>
            <person name="Inomata M."/>
        </authorList>
    </citation>
    <scope>BIOTECHNOLOGY</scope>
</reference>
<reference evidence="24" key="8">
    <citation type="journal article" date="2004" name="J. Biol. Chem.">
        <title>The crystal structure of the Calystegia sepium agglutinin reveals a novel quaternary arrangement of lectin subunits with a beta-prism fold.</title>
        <authorList>
            <person name="Bourne Y."/>
            <person name="Roig-Zamboni V."/>
            <person name="Barre A."/>
            <person name="Peumans W.J."/>
            <person name="Astoul C.H."/>
            <person name="Van Damme E.J."/>
            <person name="Rouge P."/>
        </authorList>
    </citation>
    <scope>X-RAY CRYSTALLOGRAPHY (1.37 ANGSTROMS) OF 2-153</scope>
    <scope>FUNCTION</scope>
    <scope>SUBSTRATE SPECIFICITY</scope>
    <scope>SUBUNIT</scope>
    <scope>TISSUE SPECIFICITY</scope>
    <scope>ACETYLATION AT ALA-2</scope>
    <scope>CIRCULAR DICHROISM ANALYSIS</scope>
    <scope>3D-STRUCTURE MODELING IN COMPLEX WITH CARBOHYDRATES</scope>
</reference>
<reference evidence="25" key="9">
    <citation type="journal article" date="2016" name="Sci. Rep.">
        <title>Atomic visualization of a flipped-back conformation of bisected glycans bound to specific lectins.</title>
        <authorList>
            <person name="Nagae M."/>
            <person name="Kanagawa M."/>
            <person name="Morita-Matsumoto K."/>
            <person name="Hanashima S."/>
            <person name="Kizuka Y."/>
            <person name="Taniguchi N."/>
            <person name="Yamaguchi Y."/>
        </authorList>
    </citation>
    <scope>X-RAY CRYSTALLOGRAPHY (1.85 ANGSTROMS) OF 3-153 IN COMPLEX WITH BISECTED BIANTENNARY GLYCAN</scope>
    <scope>FUNCTION</scope>
    <scope>SUBSTRATE SPECIFICITY</scope>
</reference>
<reference evidence="26" key="10">
    <citation type="journal article" date="2017" name="Glycobiology">
        <title>Distinct roles for each N-glycan branch interacting with mannose-binding type Jacalin-related lectins Orysata and Calsepa.</title>
        <authorList>
            <person name="Nagae M."/>
            <person name="Mishra S.K."/>
            <person name="Hanashima S."/>
            <person name="Tateno H."/>
            <person name="Yamaguchi Y."/>
        </authorList>
    </citation>
    <scope>X-RAY CRYSTALLOGRAPHY (1.65 ANGSTROMS) IN COMPLEX WITH NON-BISECTED BIANTENNARY GLYCAN</scope>
    <scope>FUNCTION</scope>
    <scope>SUBSTRATE SPECIFICITY</scope>
</reference>
<evidence type="ECO:0000255" key="1">
    <source>
        <dbReference type="PROSITE-ProRule" id="PRU01088"/>
    </source>
</evidence>
<evidence type="ECO:0000269" key="2">
    <source>
    </source>
</evidence>
<evidence type="ECO:0000269" key="3">
    <source>
    </source>
</evidence>
<evidence type="ECO:0000269" key="4">
    <source>
    </source>
</evidence>
<evidence type="ECO:0000269" key="5">
    <source>
    </source>
</evidence>
<evidence type="ECO:0000269" key="6">
    <source>
    </source>
</evidence>
<evidence type="ECO:0000269" key="7">
    <source>
    </source>
</evidence>
<evidence type="ECO:0000269" key="8">
    <source>
    </source>
</evidence>
<evidence type="ECO:0000269" key="9">
    <source>
    </source>
</evidence>
<evidence type="ECO:0000269" key="10">
    <source>
    </source>
</evidence>
<evidence type="ECO:0000269" key="11">
    <source>
    </source>
</evidence>
<evidence type="ECO:0000303" key="12">
    <source>
    </source>
</evidence>
<evidence type="ECO:0000303" key="13">
    <source>
    </source>
</evidence>
<evidence type="ECO:0000303" key="14">
    <source>
    </source>
</evidence>
<evidence type="ECO:0000303" key="15">
    <source>
    </source>
</evidence>
<evidence type="ECO:0000303" key="16">
    <source>
    </source>
</evidence>
<evidence type="ECO:0000303" key="17">
    <source>
    </source>
</evidence>
<evidence type="ECO:0000303" key="18">
    <source>
    </source>
</evidence>
<evidence type="ECO:0000303" key="19">
    <source>
    </source>
</evidence>
<evidence type="ECO:0000303" key="20">
    <source>
    </source>
</evidence>
<evidence type="ECO:0000303" key="21">
    <source>
    </source>
</evidence>
<evidence type="ECO:0000305" key="22"/>
<evidence type="ECO:0000312" key="23">
    <source>
        <dbReference type="EMBL" id="AAC49564.1"/>
    </source>
</evidence>
<evidence type="ECO:0007744" key="24">
    <source>
        <dbReference type="PDB" id="1OUW"/>
    </source>
</evidence>
<evidence type="ECO:0007744" key="25">
    <source>
        <dbReference type="PDB" id="5AV7"/>
    </source>
</evidence>
<evidence type="ECO:0007744" key="26">
    <source>
        <dbReference type="PDB" id="5XFI"/>
    </source>
</evidence>
<evidence type="ECO:0007829" key="27">
    <source>
        <dbReference type="PDB" id="1OUW"/>
    </source>
</evidence>